<dbReference type="EMBL" id="CP000148">
    <property type="protein sequence ID" value="ABB30676.1"/>
    <property type="molecule type" value="Genomic_DNA"/>
</dbReference>
<dbReference type="RefSeq" id="WP_004512405.1">
    <property type="nucleotide sequence ID" value="NC_007517.1"/>
</dbReference>
<dbReference type="SMR" id="Q39YJ8"/>
<dbReference type="STRING" id="269799.Gmet_0433"/>
<dbReference type="DNASU" id="3738364"/>
<dbReference type="KEGG" id="gme:Gmet_0433"/>
<dbReference type="eggNOG" id="COG2063">
    <property type="taxonomic scope" value="Bacteria"/>
</dbReference>
<dbReference type="HOGENOM" id="CLU_069313_0_2_7"/>
<dbReference type="Proteomes" id="UP000007073">
    <property type="component" value="Chromosome"/>
</dbReference>
<dbReference type="GO" id="GO:0009427">
    <property type="term" value="C:bacterial-type flagellum basal body, distal rod, L ring"/>
    <property type="evidence" value="ECO:0007669"/>
    <property type="project" value="InterPro"/>
</dbReference>
<dbReference type="GO" id="GO:0009279">
    <property type="term" value="C:cell outer membrane"/>
    <property type="evidence" value="ECO:0007669"/>
    <property type="project" value="UniProtKB-SubCell"/>
</dbReference>
<dbReference type="GO" id="GO:0003774">
    <property type="term" value="F:cytoskeletal motor activity"/>
    <property type="evidence" value="ECO:0007669"/>
    <property type="project" value="InterPro"/>
</dbReference>
<dbReference type="GO" id="GO:0071973">
    <property type="term" value="P:bacterial-type flagellum-dependent cell motility"/>
    <property type="evidence" value="ECO:0007669"/>
    <property type="project" value="InterPro"/>
</dbReference>
<dbReference type="HAMAP" id="MF_00415">
    <property type="entry name" value="FlgH"/>
    <property type="match status" value="1"/>
</dbReference>
<dbReference type="InterPro" id="IPR000527">
    <property type="entry name" value="Flag_Lring"/>
</dbReference>
<dbReference type="PANTHER" id="PTHR34933">
    <property type="entry name" value="FLAGELLAR L-RING PROTEIN"/>
    <property type="match status" value="1"/>
</dbReference>
<dbReference type="PANTHER" id="PTHR34933:SF1">
    <property type="entry name" value="FLAGELLAR L-RING PROTEIN"/>
    <property type="match status" value="1"/>
</dbReference>
<dbReference type="Pfam" id="PF02107">
    <property type="entry name" value="FlgH"/>
    <property type="match status" value="1"/>
</dbReference>
<dbReference type="PRINTS" id="PR01008">
    <property type="entry name" value="FLGLRINGFLGH"/>
</dbReference>
<dbReference type="PROSITE" id="PS51257">
    <property type="entry name" value="PROKAR_LIPOPROTEIN"/>
    <property type="match status" value="1"/>
</dbReference>
<accession>Q39YJ8</accession>
<reference key="1">
    <citation type="journal article" date="2009" name="BMC Microbiol.">
        <title>The genome sequence of Geobacter metallireducens: features of metabolism, physiology and regulation common and dissimilar to Geobacter sulfurreducens.</title>
        <authorList>
            <person name="Aklujkar M."/>
            <person name="Krushkal J."/>
            <person name="DiBartolo G."/>
            <person name="Lapidus A."/>
            <person name="Land M.L."/>
            <person name="Lovley D.R."/>
        </authorList>
    </citation>
    <scope>NUCLEOTIDE SEQUENCE [LARGE SCALE GENOMIC DNA]</scope>
    <source>
        <strain>ATCC 53774 / DSM 7210 / GS-15</strain>
    </source>
</reference>
<organism>
    <name type="scientific">Geobacter metallireducens (strain ATCC 53774 / DSM 7210 / GS-15)</name>
    <dbReference type="NCBI Taxonomy" id="269799"/>
    <lineage>
        <taxon>Bacteria</taxon>
        <taxon>Pseudomonadati</taxon>
        <taxon>Thermodesulfobacteriota</taxon>
        <taxon>Desulfuromonadia</taxon>
        <taxon>Geobacterales</taxon>
        <taxon>Geobacteraceae</taxon>
        <taxon>Geobacter</taxon>
    </lineage>
</organism>
<sequence>MKRLAVSILCLALAGCAIEKAEVRTPSFDEQLPAPQPSYASGSIWQAASAGIAEDHKARRKGDIITVVIVENASASKQATTDTDRKASISASIPYLMGLEKQKLILGKLTGADLGNLLGASTDSTFGGSGATTRKENLVATMSAKIIDVLPNGNFLIEGRRNVKVNNEDQIIILQGTVRPRDVSPDNTVNSSLIADARITYTGEGVISDRQRPGWLMNFLDYIWPF</sequence>
<protein>
    <recommendedName>
        <fullName evidence="1">Flagellar L-ring protein</fullName>
    </recommendedName>
    <alternativeName>
        <fullName evidence="1">Basal body L-ring protein</fullName>
    </alternativeName>
</protein>
<evidence type="ECO:0000255" key="1">
    <source>
        <dbReference type="HAMAP-Rule" id="MF_00415"/>
    </source>
</evidence>
<name>FLGH_GEOMG</name>
<proteinExistence type="inferred from homology"/>
<comment type="function">
    <text evidence="1">Assembles around the rod to form the L-ring and probably protects the motor/basal body from shearing forces during rotation.</text>
</comment>
<comment type="subunit">
    <text evidence="1">The basal body constitutes a major portion of the flagellar organelle and consists of four rings (L,P,S, and M) mounted on a central rod.</text>
</comment>
<comment type="subcellular location">
    <subcellularLocation>
        <location evidence="1">Cell outer membrane</location>
        <topology evidence="1">Lipid-anchor</topology>
    </subcellularLocation>
    <subcellularLocation>
        <location evidence="1">Bacterial flagellum basal body</location>
    </subcellularLocation>
</comment>
<comment type="similarity">
    <text evidence="1">Belongs to the FlgH family.</text>
</comment>
<keyword id="KW-0975">Bacterial flagellum</keyword>
<keyword id="KW-0998">Cell outer membrane</keyword>
<keyword id="KW-0449">Lipoprotein</keyword>
<keyword id="KW-0472">Membrane</keyword>
<keyword id="KW-0564">Palmitate</keyword>
<keyword id="KW-1185">Reference proteome</keyword>
<keyword id="KW-0732">Signal</keyword>
<gene>
    <name evidence="1" type="primary">flgH</name>
    <name type="ordered locus">Gmet_0433</name>
</gene>
<feature type="signal peptide" evidence="1">
    <location>
        <begin position="1"/>
        <end position="15"/>
    </location>
</feature>
<feature type="chain" id="PRO_0000236822" description="Flagellar L-ring protein">
    <location>
        <begin position="16"/>
        <end position="226"/>
    </location>
</feature>
<feature type="lipid moiety-binding region" description="N-palmitoyl cysteine" evidence="1">
    <location>
        <position position="16"/>
    </location>
</feature>
<feature type="lipid moiety-binding region" description="S-diacylglycerol cysteine" evidence="1">
    <location>
        <position position="16"/>
    </location>
</feature>